<evidence type="ECO:0000255" key="1">
    <source>
        <dbReference type="HAMAP-Rule" id="MF_01148"/>
    </source>
</evidence>
<feature type="chain" id="PRO_0000178083" description="Apolipoprotein N-acyltransferase">
    <location>
        <begin position="1"/>
        <end position="496"/>
    </location>
</feature>
<feature type="transmembrane region" description="Helical" evidence="1">
    <location>
        <begin position="23"/>
        <end position="43"/>
    </location>
</feature>
<feature type="transmembrane region" description="Helical" evidence="1">
    <location>
        <begin position="50"/>
        <end position="70"/>
    </location>
</feature>
<feature type="transmembrane region" description="Helical" evidence="1">
    <location>
        <begin position="84"/>
        <end position="104"/>
    </location>
</feature>
<feature type="transmembrane region" description="Helical" evidence="1">
    <location>
        <begin position="126"/>
        <end position="146"/>
    </location>
</feature>
<feature type="transmembrane region" description="Helical" evidence="1">
    <location>
        <begin position="171"/>
        <end position="191"/>
    </location>
</feature>
<feature type="transmembrane region" description="Helical" evidence="1">
    <location>
        <begin position="205"/>
        <end position="225"/>
    </location>
</feature>
<feature type="transmembrane region" description="Helical" evidence="1">
    <location>
        <begin position="476"/>
        <end position="496"/>
    </location>
</feature>
<feature type="domain" description="CN hydrolase" evidence="1">
    <location>
        <begin position="236"/>
        <end position="464"/>
    </location>
</feature>
<feature type="active site" description="Proton acceptor" evidence="1">
    <location>
        <position position="276"/>
    </location>
</feature>
<feature type="active site" evidence="1">
    <location>
        <position position="325"/>
    </location>
</feature>
<feature type="active site" description="Nucleophile" evidence="1">
    <location>
        <position position="374"/>
    </location>
</feature>
<reference key="1">
    <citation type="journal article" date="2003" name="Nature">
        <title>Genome divergence in two Prochlorococcus ecotypes reflects oceanic niche differentiation.</title>
        <authorList>
            <person name="Rocap G."/>
            <person name="Larimer F.W."/>
            <person name="Lamerdin J.E."/>
            <person name="Malfatti S."/>
            <person name="Chain P."/>
            <person name="Ahlgren N.A."/>
            <person name="Arellano A."/>
            <person name="Coleman M."/>
            <person name="Hauser L."/>
            <person name="Hess W.R."/>
            <person name="Johnson Z.I."/>
            <person name="Land M.L."/>
            <person name="Lindell D."/>
            <person name="Post A.F."/>
            <person name="Regala W."/>
            <person name="Shah M."/>
            <person name="Shaw S.L."/>
            <person name="Steglich C."/>
            <person name="Sullivan M.B."/>
            <person name="Ting C.S."/>
            <person name="Tolonen A."/>
            <person name="Webb E.A."/>
            <person name="Zinser E.R."/>
            <person name="Chisholm S.W."/>
        </authorList>
    </citation>
    <scope>NUCLEOTIDE SEQUENCE [LARGE SCALE GENOMIC DNA]</scope>
    <source>
        <strain>CCMP1986 / NIES-2087 / MED4</strain>
    </source>
</reference>
<name>LNT_PROMP</name>
<gene>
    <name evidence="1" type="primary">lnt</name>
    <name type="ordered locus">PMM1292</name>
</gene>
<comment type="function">
    <text evidence="1">Catalyzes the phospholipid dependent N-acylation of the N-terminal cysteine of apolipoprotein, the last step in lipoprotein maturation.</text>
</comment>
<comment type="catalytic activity">
    <reaction evidence="1">
        <text>N-terminal S-1,2-diacyl-sn-glyceryl-L-cysteinyl-[lipoprotein] + a glycerophospholipid = N-acyl-S-1,2-diacyl-sn-glyceryl-L-cysteinyl-[lipoprotein] + a 2-acyl-sn-glycero-3-phospholipid + H(+)</text>
        <dbReference type="Rhea" id="RHEA:48228"/>
        <dbReference type="Rhea" id="RHEA-COMP:14681"/>
        <dbReference type="Rhea" id="RHEA-COMP:14684"/>
        <dbReference type="ChEBI" id="CHEBI:15378"/>
        <dbReference type="ChEBI" id="CHEBI:136912"/>
        <dbReference type="ChEBI" id="CHEBI:140656"/>
        <dbReference type="ChEBI" id="CHEBI:140657"/>
        <dbReference type="ChEBI" id="CHEBI:140660"/>
        <dbReference type="EC" id="2.3.1.269"/>
    </reaction>
</comment>
<comment type="pathway">
    <text evidence="1">Protein modification; lipoprotein biosynthesis (N-acyl transfer).</text>
</comment>
<comment type="subcellular location">
    <subcellularLocation>
        <location evidence="1">Cell inner membrane</location>
        <topology evidence="1">Multi-pass membrane protein</topology>
    </subcellularLocation>
</comment>
<comment type="similarity">
    <text evidence="1">Belongs to the CN hydrolase family. Apolipoprotein N-acyltransferase subfamily.</text>
</comment>
<keyword id="KW-0012">Acyltransferase</keyword>
<keyword id="KW-0997">Cell inner membrane</keyword>
<keyword id="KW-1003">Cell membrane</keyword>
<keyword id="KW-0472">Membrane</keyword>
<keyword id="KW-0808">Transferase</keyword>
<keyword id="KW-0812">Transmembrane</keyword>
<keyword id="KW-1133">Transmembrane helix</keyword>
<proteinExistence type="inferred from homology"/>
<organism>
    <name type="scientific">Prochlorococcus marinus subsp. pastoris (strain CCMP1986 / NIES-2087 / MED4)</name>
    <dbReference type="NCBI Taxonomy" id="59919"/>
    <lineage>
        <taxon>Bacteria</taxon>
        <taxon>Bacillati</taxon>
        <taxon>Cyanobacteriota</taxon>
        <taxon>Cyanophyceae</taxon>
        <taxon>Synechococcales</taxon>
        <taxon>Prochlorococcaceae</taxon>
        <taxon>Prochlorococcus</taxon>
    </lineage>
</organism>
<protein>
    <recommendedName>
        <fullName evidence="1">Apolipoprotein N-acyltransferase</fullName>
        <shortName evidence="1">ALP N-acyltransferase</shortName>
        <ecNumber evidence="1">2.3.1.269</ecNumber>
    </recommendedName>
</protein>
<accession>Q7V0G7</accession>
<dbReference type="EC" id="2.3.1.269" evidence="1"/>
<dbReference type="EMBL" id="BX548174">
    <property type="protein sequence ID" value="CAE19751.1"/>
    <property type="molecule type" value="Genomic_DNA"/>
</dbReference>
<dbReference type="SMR" id="Q7V0G7"/>
<dbReference type="STRING" id="59919.PMM1292"/>
<dbReference type="KEGG" id="pmm:PMM1292"/>
<dbReference type="eggNOG" id="COG0815">
    <property type="taxonomic scope" value="Bacteria"/>
</dbReference>
<dbReference type="HOGENOM" id="CLU_019563_1_0_3"/>
<dbReference type="OrthoDB" id="9804277at2"/>
<dbReference type="UniPathway" id="UPA00666"/>
<dbReference type="Proteomes" id="UP000001026">
    <property type="component" value="Chromosome"/>
</dbReference>
<dbReference type="GO" id="GO:0005886">
    <property type="term" value="C:plasma membrane"/>
    <property type="evidence" value="ECO:0007669"/>
    <property type="project" value="UniProtKB-SubCell"/>
</dbReference>
<dbReference type="GO" id="GO:0016410">
    <property type="term" value="F:N-acyltransferase activity"/>
    <property type="evidence" value="ECO:0007669"/>
    <property type="project" value="UniProtKB-UniRule"/>
</dbReference>
<dbReference type="GO" id="GO:0042158">
    <property type="term" value="P:lipoprotein biosynthetic process"/>
    <property type="evidence" value="ECO:0007669"/>
    <property type="project" value="UniProtKB-UniRule"/>
</dbReference>
<dbReference type="Gene3D" id="3.60.110.10">
    <property type="entry name" value="Carbon-nitrogen hydrolase"/>
    <property type="match status" value="1"/>
</dbReference>
<dbReference type="HAMAP" id="MF_01148">
    <property type="entry name" value="Lnt"/>
    <property type="match status" value="1"/>
</dbReference>
<dbReference type="InterPro" id="IPR004563">
    <property type="entry name" value="Apolipo_AcylTrfase"/>
</dbReference>
<dbReference type="InterPro" id="IPR003010">
    <property type="entry name" value="C-N_Hydrolase"/>
</dbReference>
<dbReference type="InterPro" id="IPR036526">
    <property type="entry name" value="C-N_Hydrolase_sf"/>
</dbReference>
<dbReference type="PANTHER" id="PTHR38686">
    <property type="entry name" value="APOLIPOPROTEIN N-ACYLTRANSFERASE"/>
    <property type="match status" value="1"/>
</dbReference>
<dbReference type="PANTHER" id="PTHR38686:SF1">
    <property type="entry name" value="APOLIPOPROTEIN N-ACYLTRANSFERASE"/>
    <property type="match status" value="1"/>
</dbReference>
<dbReference type="SUPFAM" id="SSF56317">
    <property type="entry name" value="Carbon-nitrogen hydrolase"/>
    <property type="match status" value="1"/>
</dbReference>
<dbReference type="PROSITE" id="PS50263">
    <property type="entry name" value="CN_HYDROLASE"/>
    <property type="match status" value="1"/>
</dbReference>
<sequence length="496" mass="56347">MINTQNKKFNKYFVPCLGGIFGGIATSTHFWLLFMPLSLFILWSRSDKKLANFLWGFFFILVSHSWLYELHPLTWLGFSWISSLIISISILFGCSIIGGILVYLWGLLVKKILQKKEISNMNSLRLTIKVLLLSFAWGIGEFILSQTPLFWIGLGEGIVPGDLYLAGLARWIGASGLCVVQLTIGFWIYLIYEKWKRKYHFKKTFLFGLLILVILHFLGGLTNPIERNNDYPVALWQTNMPTREKTNFKNQFINDKLISAQKIALSNDAKLLITPEGTLNNNFNLNFKSKIRMLAGGFRNSKNGLRSSLLGYQIGDKTYSSFIDKHRLVPLGEKIPGFLNIFSRGLSAVGGIQPGSDSRFFKWKFTQPLAIAICYEITDGFKIRNAVKSGAELIISAANLDPYPRKLHYQFLSLARVRSIENKKDNIIISNTGPSGLISEEGKIIKLFDPNTEQNDVVNPNFSIEKTFYTTYGERPLFLLCLFLIGLNLYFGKFTN</sequence>